<proteinExistence type="inferred from homology"/>
<comment type="function">
    <text evidence="1">Catalyzes the reductive cleavage of azo bond in aromatic azo compounds to the corresponding amines. Requires NADPH, but not NADH, as an electron donor for its activity (By similarity).</text>
</comment>
<comment type="cofactor">
    <cofactor evidence="1">
        <name>FMN</name>
        <dbReference type="ChEBI" id="CHEBI:58210"/>
    </cofactor>
</comment>
<comment type="subunit">
    <text evidence="1">Homotetramer.</text>
</comment>
<comment type="similarity">
    <text evidence="2">Belongs to the azoreductase type 2 family.</text>
</comment>
<keyword id="KW-0285">Flavoprotein</keyword>
<keyword id="KW-0288">FMN</keyword>
<keyword id="KW-0521">NADP</keyword>
<keyword id="KW-0560">Oxidoreductase</keyword>
<accession>Q5HIB5</accession>
<reference key="1">
    <citation type="journal article" date="2005" name="J. Bacteriol.">
        <title>Insights on evolution of virulence and resistance from the complete genome analysis of an early methicillin-resistant Staphylococcus aureus strain and a biofilm-producing methicillin-resistant Staphylococcus epidermidis strain.</title>
        <authorList>
            <person name="Gill S.R."/>
            <person name="Fouts D.E."/>
            <person name="Archer G.L."/>
            <person name="Mongodin E.F."/>
            <person name="DeBoy R.T."/>
            <person name="Ravel J."/>
            <person name="Paulsen I.T."/>
            <person name="Kolonay J.F."/>
            <person name="Brinkac L.M."/>
            <person name="Beanan M.J."/>
            <person name="Dodson R.J."/>
            <person name="Daugherty S.C."/>
            <person name="Madupu R."/>
            <person name="Angiuoli S.V."/>
            <person name="Durkin A.S."/>
            <person name="Haft D.H."/>
            <person name="Vamathevan J.J."/>
            <person name="Khouri H."/>
            <person name="Utterback T.R."/>
            <person name="Lee C."/>
            <person name="Dimitrov G."/>
            <person name="Jiang L."/>
            <person name="Qin H."/>
            <person name="Weidman J."/>
            <person name="Tran K."/>
            <person name="Kang K.H."/>
            <person name="Hance I.R."/>
            <person name="Nelson K.E."/>
            <person name="Fraser C.M."/>
        </authorList>
    </citation>
    <scope>NUCLEOTIDE SEQUENCE [LARGE SCALE GENOMIC DNA]</scope>
    <source>
        <strain>COL</strain>
    </source>
</reference>
<dbReference type="EC" id="1.7.-.-"/>
<dbReference type="EMBL" id="CP000046">
    <property type="protein sequence ID" value="AAW37716.1"/>
    <property type="molecule type" value="Genomic_DNA"/>
</dbReference>
<dbReference type="RefSeq" id="WP_000677261.1">
    <property type="nucleotide sequence ID" value="NZ_JBGOFO010000009.1"/>
</dbReference>
<dbReference type="SMR" id="Q5HIB5"/>
<dbReference type="KEGG" id="sac:SACOL0607"/>
<dbReference type="HOGENOM" id="CLU_055322_1_2_9"/>
<dbReference type="Proteomes" id="UP000000530">
    <property type="component" value="Chromosome"/>
</dbReference>
<dbReference type="GO" id="GO:0005829">
    <property type="term" value="C:cytosol"/>
    <property type="evidence" value="ECO:0007669"/>
    <property type="project" value="TreeGrafter"/>
</dbReference>
<dbReference type="GO" id="GO:0010181">
    <property type="term" value="F:FMN binding"/>
    <property type="evidence" value="ECO:0007669"/>
    <property type="project" value="TreeGrafter"/>
</dbReference>
<dbReference type="GO" id="GO:0016491">
    <property type="term" value="F:oxidoreductase activity"/>
    <property type="evidence" value="ECO:0007669"/>
    <property type="project" value="UniProtKB-KW"/>
</dbReference>
<dbReference type="Gene3D" id="3.40.50.360">
    <property type="match status" value="1"/>
</dbReference>
<dbReference type="InterPro" id="IPR029039">
    <property type="entry name" value="Flavoprotein-like_sf"/>
</dbReference>
<dbReference type="InterPro" id="IPR005025">
    <property type="entry name" value="FMN_Rdtase-like_dom"/>
</dbReference>
<dbReference type="InterPro" id="IPR050712">
    <property type="entry name" value="NAD(P)H-dep_reductase"/>
</dbReference>
<dbReference type="PANTHER" id="PTHR30543">
    <property type="entry name" value="CHROMATE REDUCTASE"/>
    <property type="match status" value="1"/>
</dbReference>
<dbReference type="PANTHER" id="PTHR30543:SF21">
    <property type="entry name" value="NAD(P)H-DEPENDENT FMN REDUCTASE LOT6"/>
    <property type="match status" value="1"/>
</dbReference>
<dbReference type="Pfam" id="PF03358">
    <property type="entry name" value="FMN_red"/>
    <property type="match status" value="1"/>
</dbReference>
<dbReference type="SUPFAM" id="SSF52218">
    <property type="entry name" value="Flavoproteins"/>
    <property type="match status" value="1"/>
</dbReference>
<name>AZO1_STAAC</name>
<evidence type="ECO:0000250" key="1"/>
<evidence type="ECO:0000305" key="2"/>
<feature type="chain" id="PRO_0000245991" description="FMN-dependent NADPH-azoreductase">
    <location>
        <begin position="1"/>
        <end position="188"/>
    </location>
</feature>
<organism>
    <name type="scientific">Staphylococcus aureus (strain COL)</name>
    <dbReference type="NCBI Taxonomy" id="93062"/>
    <lineage>
        <taxon>Bacteria</taxon>
        <taxon>Bacillati</taxon>
        <taxon>Bacillota</taxon>
        <taxon>Bacilli</taxon>
        <taxon>Bacillales</taxon>
        <taxon>Staphylococcaceae</taxon>
        <taxon>Staphylococcus</taxon>
    </lineage>
</organism>
<protein>
    <recommendedName>
        <fullName>FMN-dependent NADPH-azoreductase</fullName>
        <ecNumber>1.7.-.-</ecNumber>
    </recommendedName>
    <alternativeName>
        <fullName>NADPH-dependent flavo-azoreductase</fullName>
    </alternativeName>
    <alternativeName>
        <fullName>NADPH-flavin azoreductase</fullName>
    </alternativeName>
</protein>
<gene>
    <name type="primary">azo1</name>
    <name type="ordered locus">SACOL0607</name>
</gene>
<sequence length="188" mass="20912">MKGLIIIGSAQVNSHTSALARYLTEHFKTHDIEAEIFDLAEKPLNQLDFSGTTPSIDEIKQNMKDLKEKAMAADFLILGTPNYHGSYSGILKNALDHLNMDYFKMKPVGLIGNSGGIVSSEPLSHLRVIVRSLLGIAVPTQIATHDSDFAKNEDGSYYLNDSEFQLRARLFVDQIVSFVNNSPYEHLK</sequence>